<comment type="function">
    <text>May have a regulatory function.</text>
</comment>
<feature type="chain" id="PRO_0000157900" description="Uncharacterized protein ssr2439">
    <location>
        <begin position="1"/>
        <end position="97"/>
    </location>
</feature>
<feature type="sequence conflict" description="In Ref. 1; CAA48110." evidence="1" ref="1">
    <original>I</original>
    <variation>M</variation>
    <location>
        <position position="68"/>
    </location>
</feature>
<reference key="1">
    <citation type="journal article" date="1993" name="Plant Mol. Biol.">
        <title>Nucleotide sequence and homology comparison of two genes of the sulfate transport operon from the cyanobacterium Synechocystis sp. PCC 6803.</title>
        <authorList>
            <person name="Kohn C."/>
            <person name="Schumann J."/>
        </authorList>
    </citation>
    <scope>NUCLEOTIDE SEQUENCE [GENOMIC DNA]</scope>
</reference>
<reference key="2">
    <citation type="journal article" date="1996" name="DNA Res.">
        <title>Sequence analysis of the genome of the unicellular cyanobacterium Synechocystis sp. strain PCC6803. II. Sequence determination of the entire genome and assignment of potential protein-coding regions.</title>
        <authorList>
            <person name="Kaneko T."/>
            <person name="Sato S."/>
            <person name="Kotani H."/>
            <person name="Tanaka A."/>
            <person name="Asamizu E."/>
            <person name="Nakamura Y."/>
            <person name="Miyajima N."/>
            <person name="Hirosawa M."/>
            <person name="Sugiura M."/>
            <person name="Sasamoto S."/>
            <person name="Kimura T."/>
            <person name="Hosouchi T."/>
            <person name="Matsuno A."/>
            <person name="Muraki A."/>
            <person name="Nakazaki N."/>
            <person name="Naruo K."/>
            <person name="Okumura S."/>
            <person name="Shimpo S."/>
            <person name="Takeuchi C."/>
            <person name="Wada T."/>
            <person name="Watanabe A."/>
            <person name="Yamada M."/>
            <person name="Yasuda M."/>
            <person name="Tabata S."/>
        </authorList>
    </citation>
    <scope>NUCLEOTIDE SEQUENCE [LARGE SCALE GENOMIC DNA]</scope>
    <source>
        <strain>ATCC 27184 / PCC 6803 / Kazusa</strain>
    </source>
</reference>
<accession>Q01904</accession>
<accession>P74546</accession>
<sequence length="97" mass="10816">MQAQTFSHLHSQSSQRTTEVTLYLTIPESYRQEPIVTQLVSRYQLQVNILAATLGTNGGQGQFKLTLIGHAQAINNALAYLEQLQVTIVLDQESDGW</sequence>
<name>Y2439_SYNY3</name>
<gene>
    <name type="ordered locus">ssr2439</name>
</gene>
<dbReference type="EMBL" id="X67911">
    <property type="protein sequence ID" value="CAA48110.1"/>
    <property type="molecule type" value="Genomic_DNA"/>
</dbReference>
<dbReference type="EMBL" id="BA000022">
    <property type="protein sequence ID" value="BAA18652.1"/>
    <property type="molecule type" value="Genomic_DNA"/>
</dbReference>
<dbReference type="PIR" id="S31094">
    <property type="entry name" value="S31094"/>
</dbReference>
<dbReference type="SMR" id="Q01904"/>
<dbReference type="IntAct" id="Q01904">
    <property type="interactions" value="2"/>
</dbReference>
<dbReference type="STRING" id="1148.gene:10500418"/>
<dbReference type="PaxDb" id="1148-1653741"/>
<dbReference type="EnsemblBacteria" id="BAA18652">
    <property type="protein sequence ID" value="BAA18652"/>
    <property type="gene ID" value="BAA18652"/>
</dbReference>
<dbReference type="KEGG" id="syn:ssr2439"/>
<dbReference type="eggNOG" id="COG1135">
    <property type="taxonomic scope" value="Bacteria"/>
</dbReference>
<dbReference type="InParanoid" id="Q01904"/>
<dbReference type="Proteomes" id="UP000001425">
    <property type="component" value="Chromosome"/>
</dbReference>
<dbReference type="Gene3D" id="3.30.70.260">
    <property type="match status" value="1"/>
</dbReference>
<dbReference type="InterPro" id="IPR045865">
    <property type="entry name" value="ACT-like_dom_sf"/>
</dbReference>
<dbReference type="InterPro" id="IPR018449">
    <property type="entry name" value="NIL_domain"/>
</dbReference>
<dbReference type="Pfam" id="PF09383">
    <property type="entry name" value="NIL"/>
    <property type="match status" value="1"/>
</dbReference>
<dbReference type="SMART" id="SM00930">
    <property type="entry name" value="NIL"/>
    <property type="match status" value="1"/>
</dbReference>
<dbReference type="SUPFAM" id="SSF55021">
    <property type="entry name" value="ACT-like"/>
    <property type="match status" value="1"/>
</dbReference>
<organism>
    <name type="scientific">Synechocystis sp. (strain ATCC 27184 / PCC 6803 / Kazusa)</name>
    <dbReference type="NCBI Taxonomy" id="1111708"/>
    <lineage>
        <taxon>Bacteria</taxon>
        <taxon>Bacillati</taxon>
        <taxon>Cyanobacteriota</taxon>
        <taxon>Cyanophyceae</taxon>
        <taxon>Synechococcales</taxon>
        <taxon>Merismopediaceae</taxon>
        <taxon>Synechocystis</taxon>
    </lineage>
</organism>
<keyword id="KW-1185">Reference proteome</keyword>
<proteinExistence type="predicted"/>
<protein>
    <recommendedName>
        <fullName>Uncharacterized protein ssr2439</fullName>
    </recommendedName>
</protein>
<evidence type="ECO:0000305" key="1"/>